<organism>
    <name type="scientific">Borrelia garinii subsp. bavariensis (strain ATCC BAA-2496 / DSM 23469 / PBi)</name>
    <name type="common">Borreliella bavariensis</name>
    <dbReference type="NCBI Taxonomy" id="290434"/>
    <lineage>
        <taxon>Bacteria</taxon>
        <taxon>Pseudomonadati</taxon>
        <taxon>Spirochaetota</taxon>
        <taxon>Spirochaetia</taxon>
        <taxon>Spirochaetales</taxon>
        <taxon>Borreliaceae</taxon>
        <taxon>Borreliella</taxon>
    </lineage>
</organism>
<name>COAX_BORGP</name>
<feature type="chain" id="PRO_0000267503" description="Type III pantothenate kinase">
    <location>
        <begin position="1"/>
        <end position="262"/>
    </location>
</feature>
<feature type="active site" description="Proton acceptor" evidence="1">
    <location>
        <position position="111"/>
    </location>
</feature>
<feature type="binding site" evidence="1">
    <location>
        <begin position="12"/>
        <end position="19"/>
    </location>
    <ligand>
        <name>ATP</name>
        <dbReference type="ChEBI" id="CHEBI:30616"/>
    </ligand>
</feature>
<feature type="binding site" evidence="1">
    <location>
        <position position="94"/>
    </location>
    <ligand>
        <name>substrate</name>
    </ligand>
</feature>
<feature type="binding site" evidence="1">
    <location>
        <begin position="109"/>
        <end position="112"/>
    </location>
    <ligand>
        <name>substrate</name>
    </ligand>
</feature>
<feature type="binding site" evidence="1">
    <location>
        <position position="132"/>
    </location>
    <ligand>
        <name>K(+)</name>
        <dbReference type="ChEBI" id="CHEBI:29103"/>
    </ligand>
</feature>
<feature type="binding site" evidence="1">
    <location>
        <position position="135"/>
    </location>
    <ligand>
        <name>ATP</name>
        <dbReference type="ChEBI" id="CHEBI:30616"/>
    </ligand>
</feature>
<feature type="binding site" evidence="1">
    <location>
        <position position="187"/>
    </location>
    <ligand>
        <name>substrate</name>
    </ligand>
</feature>
<evidence type="ECO:0000255" key="1">
    <source>
        <dbReference type="HAMAP-Rule" id="MF_01274"/>
    </source>
</evidence>
<reference key="1">
    <citation type="journal article" date="2004" name="Nucleic Acids Res.">
        <title>Comparative analysis of the Borrelia garinii genome.</title>
        <authorList>
            <person name="Gloeckner G."/>
            <person name="Lehmann R."/>
            <person name="Romualdi A."/>
            <person name="Pradella S."/>
            <person name="Schulte-Spechtel U."/>
            <person name="Schilhabel M."/>
            <person name="Wilske B."/>
            <person name="Suehnel J."/>
            <person name="Platzer M."/>
        </authorList>
    </citation>
    <scope>NUCLEOTIDE SEQUENCE [LARGE SCALE GENOMIC DNA]</scope>
    <source>
        <strain>ATCC BAA-2496 / DSM 23469 / PBi</strain>
    </source>
</reference>
<accession>Q660Z6</accession>
<keyword id="KW-0067">ATP-binding</keyword>
<keyword id="KW-0173">Coenzyme A biosynthesis</keyword>
<keyword id="KW-0963">Cytoplasm</keyword>
<keyword id="KW-0418">Kinase</keyword>
<keyword id="KW-0479">Metal-binding</keyword>
<keyword id="KW-0547">Nucleotide-binding</keyword>
<keyword id="KW-0630">Potassium</keyword>
<keyword id="KW-0808">Transferase</keyword>
<comment type="function">
    <text evidence="1">Catalyzes the phosphorylation of pantothenate (Pan), the first step in CoA biosynthesis.</text>
</comment>
<comment type="catalytic activity">
    <reaction evidence="1">
        <text>(R)-pantothenate + ATP = (R)-4'-phosphopantothenate + ADP + H(+)</text>
        <dbReference type="Rhea" id="RHEA:16373"/>
        <dbReference type="ChEBI" id="CHEBI:10986"/>
        <dbReference type="ChEBI" id="CHEBI:15378"/>
        <dbReference type="ChEBI" id="CHEBI:29032"/>
        <dbReference type="ChEBI" id="CHEBI:30616"/>
        <dbReference type="ChEBI" id="CHEBI:456216"/>
        <dbReference type="EC" id="2.7.1.33"/>
    </reaction>
</comment>
<comment type="cofactor">
    <cofactor evidence="1">
        <name>NH4(+)</name>
        <dbReference type="ChEBI" id="CHEBI:28938"/>
    </cofactor>
    <cofactor evidence="1">
        <name>K(+)</name>
        <dbReference type="ChEBI" id="CHEBI:29103"/>
    </cofactor>
    <text evidence="1">A monovalent cation. Ammonium or potassium.</text>
</comment>
<comment type="pathway">
    <text evidence="1">Cofactor biosynthesis; coenzyme A biosynthesis; CoA from (R)-pantothenate: step 1/5.</text>
</comment>
<comment type="subunit">
    <text evidence="1">Homodimer.</text>
</comment>
<comment type="subcellular location">
    <subcellularLocation>
        <location evidence="1">Cytoplasm</location>
    </subcellularLocation>
</comment>
<comment type="similarity">
    <text evidence="1">Belongs to the type III pantothenate kinase family.</text>
</comment>
<proteinExistence type="inferred from homology"/>
<protein>
    <recommendedName>
        <fullName evidence="1">Type III pantothenate kinase</fullName>
        <ecNumber evidence="1">2.7.1.33</ecNumber>
    </recommendedName>
    <alternativeName>
        <fullName evidence="1">PanK-III</fullName>
    </alternativeName>
    <alternativeName>
        <fullName evidence="1">Pantothenic acid kinase</fullName>
    </alternativeName>
</protein>
<dbReference type="EC" id="2.7.1.33" evidence="1"/>
<dbReference type="EMBL" id="CP000013">
    <property type="protein sequence ID" value="AAU07375.1"/>
    <property type="molecule type" value="Genomic_DNA"/>
</dbReference>
<dbReference type="RefSeq" id="WP_011193837.1">
    <property type="nucleotide sequence ID" value="NZ_CP028872.1"/>
</dbReference>
<dbReference type="SMR" id="Q660Z6"/>
<dbReference type="GeneID" id="45161317"/>
<dbReference type="KEGG" id="bga:BG0536"/>
<dbReference type="eggNOG" id="COG1521">
    <property type="taxonomic scope" value="Bacteria"/>
</dbReference>
<dbReference type="HOGENOM" id="CLU_066627_1_1_12"/>
<dbReference type="OrthoDB" id="350393at2"/>
<dbReference type="UniPathway" id="UPA00241">
    <property type="reaction ID" value="UER00352"/>
</dbReference>
<dbReference type="Proteomes" id="UP000002276">
    <property type="component" value="Chromosome"/>
</dbReference>
<dbReference type="GO" id="GO:0005737">
    <property type="term" value="C:cytoplasm"/>
    <property type="evidence" value="ECO:0007669"/>
    <property type="project" value="UniProtKB-SubCell"/>
</dbReference>
<dbReference type="GO" id="GO:0005524">
    <property type="term" value="F:ATP binding"/>
    <property type="evidence" value="ECO:0007669"/>
    <property type="project" value="UniProtKB-UniRule"/>
</dbReference>
<dbReference type="GO" id="GO:0046872">
    <property type="term" value="F:metal ion binding"/>
    <property type="evidence" value="ECO:0007669"/>
    <property type="project" value="UniProtKB-KW"/>
</dbReference>
<dbReference type="GO" id="GO:0004594">
    <property type="term" value="F:pantothenate kinase activity"/>
    <property type="evidence" value="ECO:0007669"/>
    <property type="project" value="UniProtKB-UniRule"/>
</dbReference>
<dbReference type="GO" id="GO:0015937">
    <property type="term" value="P:coenzyme A biosynthetic process"/>
    <property type="evidence" value="ECO:0007669"/>
    <property type="project" value="UniProtKB-UniRule"/>
</dbReference>
<dbReference type="CDD" id="cd24015">
    <property type="entry name" value="ASKHA_NBD_PanK-III"/>
    <property type="match status" value="1"/>
</dbReference>
<dbReference type="Gene3D" id="3.30.420.40">
    <property type="match status" value="2"/>
</dbReference>
<dbReference type="HAMAP" id="MF_01274">
    <property type="entry name" value="Pantothen_kinase_3"/>
    <property type="match status" value="1"/>
</dbReference>
<dbReference type="InterPro" id="IPR043129">
    <property type="entry name" value="ATPase_NBD"/>
</dbReference>
<dbReference type="InterPro" id="IPR004619">
    <property type="entry name" value="Type_III_PanK"/>
</dbReference>
<dbReference type="NCBIfam" id="TIGR00671">
    <property type="entry name" value="baf"/>
    <property type="match status" value="1"/>
</dbReference>
<dbReference type="NCBIfam" id="NF009863">
    <property type="entry name" value="PRK13326.1"/>
    <property type="match status" value="1"/>
</dbReference>
<dbReference type="PANTHER" id="PTHR34265">
    <property type="entry name" value="TYPE III PANTOTHENATE KINASE"/>
    <property type="match status" value="1"/>
</dbReference>
<dbReference type="PANTHER" id="PTHR34265:SF1">
    <property type="entry name" value="TYPE III PANTOTHENATE KINASE"/>
    <property type="match status" value="1"/>
</dbReference>
<dbReference type="Pfam" id="PF03309">
    <property type="entry name" value="Pan_kinase"/>
    <property type="match status" value="1"/>
</dbReference>
<dbReference type="SUPFAM" id="SSF53067">
    <property type="entry name" value="Actin-like ATPase domain"/>
    <property type="match status" value="2"/>
</dbReference>
<gene>
    <name evidence="1" type="primary">coaX</name>
    <name type="ordered locus">BG0536</name>
</gene>
<sequence>MNKSLLSELIIDIGNTSIAFALFEDNKVNLFIKMKTNLMLSYDEVYSFFKENFDFNVNQVFISSVVPVLNKIFENIIFSFFKIKPLFISFDLNYDLTFNPYGSGKFLLGSDVFANLVAAIENYSLENVLVADLGTACTIFAVSRQDGILGGLINSGPLINFNSLLDNAYLLNKFPISTPTNLLERTTSGSVNSGLFYQYKYLIEGVYHDIKKIYKRGFNLIITGGNANLLLPLIEVEFIFNIHLTVEGIRILGNSIVVKFVN</sequence>